<accession>Q88S38</accession>
<accession>F9ULG0</accession>
<protein>
    <recommendedName>
        <fullName evidence="1">Inositol 2-dehydrogenase/D-chiro-inositol 3-dehydrogenase</fullName>
        <ecNumber evidence="1">1.1.1.18</ecNumber>
        <ecNumber evidence="1">1.1.1.369</ecNumber>
    </recommendedName>
    <alternativeName>
        <fullName evidence="1">Myo-inositol 2-dehydrogenase/D-chiro-inositol 3-dehydrogenase</fullName>
        <shortName evidence="1">MI 2-dehydrogenase/DCI 3-dehydrogenase</shortName>
    </alternativeName>
</protein>
<proteinExistence type="inferred from homology"/>
<comment type="function">
    <text evidence="1">Involved in the oxidation of myo-inositol (MI) and D-chiro-inositol (DCI) to 2-keto-myo-inositol (2KMI or 2-inosose) and 1-keto-D-chiro-inositol (1KDCI), respectively.</text>
</comment>
<comment type="catalytic activity">
    <reaction evidence="1">
        <text>myo-inositol + NAD(+) = scyllo-inosose + NADH + H(+)</text>
        <dbReference type="Rhea" id="RHEA:16949"/>
        <dbReference type="ChEBI" id="CHEBI:15378"/>
        <dbReference type="ChEBI" id="CHEBI:17268"/>
        <dbReference type="ChEBI" id="CHEBI:17811"/>
        <dbReference type="ChEBI" id="CHEBI:57540"/>
        <dbReference type="ChEBI" id="CHEBI:57945"/>
        <dbReference type="EC" id="1.1.1.18"/>
    </reaction>
</comment>
<comment type="catalytic activity">
    <reaction evidence="1">
        <text>1D-chiro-inositol + NAD(+) = scyllo-inosine + NADH + H(+)</text>
        <dbReference type="Rhea" id="RHEA:25832"/>
        <dbReference type="ChEBI" id="CHEBI:15378"/>
        <dbReference type="ChEBI" id="CHEBI:27372"/>
        <dbReference type="ChEBI" id="CHEBI:50920"/>
        <dbReference type="ChEBI" id="CHEBI:57540"/>
        <dbReference type="ChEBI" id="CHEBI:57945"/>
        <dbReference type="EC" id="1.1.1.369"/>
    </reaction>
</comment>
<comment type="pathway">
    <text evidence="1">Polyol metabolism; myo-inositol degradation into acetyl-CoA; acetyl-CoA from myo-inositol: step 1/7.</text>
</comment>
<comment type="subunit">
    <text evidence="1">Homotetramer.</text>
</comment>
<comment type="similarity">
    <text evidence="1">Belongs to the Gfo/Idh/MocA family.</text>
</comment>
<organism>
    <name type="scientific">Lactiplantibacillus plantarum (strain ATCC BAA-793 / NCIMB 8826 / WCFS1)</name>
    <name type="common">Lactobacillus plantarum</name>
    <dbReference type="NCBI Taxonomy" id="220668"/>
    <lineage>
        <taxon>Bacteria</taxon>
        <taxon>Bacillati</taxon>
        <taxon>Bacillota</taxon>
        <taxon>Bacilli</taxon>
        <taxon>Lactobacillales</taxon>
        <taxon>Lactobacillaceae</taxon>
        <taxon>Lactiplantibacillus</taxon>
    </lineage>
</organism>
<dbReference type="EC" id="1.1.1.18" evidence="1"/>
<dbReference type="EC" id="1.1.1.369" evidence="1"/>
<dbReference type="EMBL" id="AL935263">
    <property type="protein sequence ID" value="CCC80567.1"/>
    <property type="molecule type" value="Genomic_DNA"/>
</dbReference>
<dbReference type="RefSeq" id="WP_011102248.1">
    <property type="nucleotide sequence ID" value="NC_004567.2"/>
</dbReference>
<dbReference type="RefSeq" id="YP_004891081.1">
    <property type="nucleotide sequence ID" value="NC_004567.2"/>
</dbReference>
<dbReference type="SMR" id="Q88S38"/>
<dbReference type="STRING" id="220668.lp_3606"/>
<dbReference type="EnsemblBacteria" id="CCC80567">
    <property type="protein sequence ID" value="CCC80567"/>
    <property type="gene ID" value="lp_3606"/>
</dbReference>
<dbReference type="KEGG" id="lpl:lp_3606"/>
<dbReference type="PATRIC" id="fig|220668.9.peg.3010"/>
<dbReference type="eggNOG" id="COG0673">
    <property type="taxonomic scope" value="Bacteria"/>
</dbReference>
<dbReference type="HOGENOM" id="CLU_023194_0_1_9"/>
<dbReference type="OrthoDB" id="9815825at2"/>
<dbReference type="PhylomeDB" id="Q88S38"/>
<dbReference type="UniPathway" id="UPA00076">
    <property type="reaction ID" value="UER00143"/>
</dbReference>
<dbReference type="Proteomes" id="UP000000432">
    <property type="component" value="Chromosome"/>
</dbReference>
<dbReference type="GO" id="GO:0050112">
    <property type="term" value="F:inositol 2-dehydrogenase (NAD+) activity"/>
    <property type="evidence" value="ECO:0007669"/>
    <property type="project" value="UniProtKB-UniRule"/>
</dbReference>
<dbReference type="GO" id="GO:0000166">
    <property type="term" value="F:nucleotide binding"/>
    <property type="evidence" value="ECO:0007669"/>
    <property type="project" value="InterPro"/>
</dbReference>
<dbReference type="GO" id="GO:0019310">
    <property type="term" value="P:inositol catabolic process"/>
    <property type="evidence" value="ECO:0007669"/>
    <property type="project" value="UniProtKB-UniRule"/>
</dbReference>
<dbReference type="Gene3D" id="3.30.360.10">
    <property type="entry name" value="Dihydrodipicolinate Reductase, domain 2"/>
    <property type="match status" value="1"/>
</dbReference>
<dbReference type="Gene3D" id="3.40.50.720">
    <property type="entry name" value="NAD(P)-binding Rossmann-like Domain"/>
    <property type="match status" value="1"/>
</dbReference>
<dbReference type="HAMAP" id="MF_01671">
    <property type="entry name" value="IolG"/>
    <property type="match status" value="1"/>
</dbReference>
<dbReference type="InterPro" id="IPR050424">
    <property type="entry name" value="Gfo-Idh-MocA_inositol_DH"/>
</dbReference>
<dbReference type="InterPro" id="IPR004104">
    <property type="entry name" value="Gfo/Idh/MocA-like_OxRdtase_C"/>
</dbReference>
<dbReference type="InterPro" id="IPR000683">
    <property type="entry name" value="Gfo/Idh/MocA-like_OxRdtase_N"/>
</dbReference>
<dbReference type="InterPro" id="IPR023794">
    <property type="entry name" value="MI/DCI_dehydrogenase"/>
</dbReference>
<dbReference type="InterPro" id="IPR036291">
    <property type="entry name" value="NAD(P)-bd_dom_sf"/>
</dbReference>
<dbReference type="PANTHER" id="PTHR43593">
    <property type="match status" value="1"/>
</dbReference>
<dbReference type="PANTHER" id="PTHR43593:SF1">
    <property type="entry name" value="INOSITOL 2-DEHYDROGENASE"/>
    <property type="match status" value="1"/>
</dbReference>
<dbReference type="Pfam" id="PF01408">
    <property type="entry name" value="GFO_IDH_MocA"/>
    <property type="match status" value="1"/>
</dbReference>
<dbReference type="Pfam" id="PF02894">
    <property type="entry name" value="GFO_IDH_MocA_C"/>
    <property type="match status" value="1"/>
</dbReference>
<dbReference type="SUPFAM" id="SSF55347">
    <property type="entry name" value="Glyceraldehyde-3-phosphate dehydrogenase-like, C-terminal domain"/>
    <property type="match status" value="1"/>
</dbReference>
<dbReference type="SUPFAM" id="SSF51735">
    <property type="entry name" value="NAD(P)-binding Rossmann-fold domains"/>
    <property type="match status" value="1"/>
</dbReference>
<gene>
    <name evidence="1" type="primary">iolG</name>
    <name type="ordered locus">lp_3606</name>
</gene>
<keyword id="KW-0520">NAD</keyword>
<keyword id="KW-0560">Oxidoreductase</keyword>
<keyword id="KW-1185">Reference proteome</keyword>
<evidence type="ECO:0000255" key="1">
    <source>
        <dbReference type="HAMAP-Rule" id="MF_01671"/>
    </source>
</evidence>
<sequence>MAEAHVTKVGIVGIGFIGSDHLHRLTKTVANVDVTAVCDIVPGKAQKALDQQGLTATTYEDYHDLVNDPNVEVVVCTANNEAHYEIVMAALKAGKFTFCEKPLALDAKQCMDIIDSEKKLGRRMLQVGFMRHYAPEYVQMKKMIDDGVIGKPLMMDQRHYNQTQPEEYDSSRSIIETAIHEIDIDHWLVNDDYANIRVFSPKQTRHVQNAKIQDPQIVMIETKSGINIINEVFVRCQYGYDIKCDVIGEEGVLELPTVPQVATRLNAQYSTAILTDWKARFESAYDIEFRDFINHVSQNESPVGPSAWDGYIAAVTADAALKSLAEDGAKQDLDFPSTPAFYTESEKVSE</sequence>
<name>IOLG_LACPL</name>
<reference key="1">
    <citation type="journal article" date="2003" name="Proc. Natl. Acad. Sci. U.S.A.">
        <title>Complete genome sequence of Lactobacillus plantarum WCFS1.</title>
        <authorList>
            <person name="Kleerebezem M."/>
            <person name="Boekhorst J."/>
            <person name="van Kranenburg R."/>
            <person name="Molenaar D."/>
            <person name="Kuipers O.P."/>
            <person name="Leer R."/>
            <person name="Tarchini R."/>
            <person name="Peters S.A."/>
            <person name="Sandbrink H.M."/>
            <person name="Fiers M.W.E.J."/>
            <person name="Stiekema W."/>
            <person name="Klein Lankhorst R.M."/>
            <person name="Bron P.A."/>
            <person name="Hoffer S.M."/>
            <person name="Nierop Groot M.N."/>
            <person name="Kerkhoven R."/>
            <person name="De Vries M."/>
            <person name="Ursing B."/>
            <person name="De Vos W.M."/>
            <person name="Siezen R.J."/>
        </authorList>
    </citation>
    <scope>NUCLEOTIDE SEQUENCE [LARGE SCALE GENOMIC DNA]</scope>
    <source>
        <strain>ATCC BAA-793 / NCIMB 8826 / WCFS1</strain>
    </source>
</reference>
<reference key="2">
    <citation type="journal article" date="2012" name="J. Bacteriol.">
        <title>Complete resequencing and reannotation of the Lactobacillus plantarum WCFS1 genome.</title>
        <authorList>
            <person name="Siezen R.J."/>
            <person name="Francke C."/>
            <person name="Renckens B."/>
            <person name="Boekhorst J."/>
            <person name="Wels M."/>
            <person name="Kleerebezem M."/>
            <person name="van Hijum S.A."/>
        </authorList>
    </citation>
    <scope>NUCLEOTIDE SEQUENCE [LARGE SCALE GENOMIC DNA]</scope>
    <scope>GENOME REANNOTATION</scope>
    <source>
        <strain>ATCC BAA-793 / NCIMB 8826 / WCFS1</strain>
    </source>
</reference>
<feature type="chain" id="PRO_0000352573" description="Inositol 2-dehydrogenase/D-chiro-inositol 3-dehydrogenase">
    <location>
        <begin position="1"/>
        <end position="350"/>
    </location>
</feature>